<organism>
    <name type="scientific">Oncorhynchus mykiss</name>
    <name type="common">Rainbow trout</name>
    <name type="synonym">Salmo gairdneri</name>
    <dbReference type="NCBI Taxonomy" id="8022"/>
    <lineage>
        <taxon>Eukaryota</taxon>
        <taxon>Metazoa</taxon>
        <taxon>Chordata</taxon>
        <taxon>Craniata</taxon>
        <taxon>Vertebrata</taxon>
        <taxon>Euteleostomi</taxon>
        <taxon>Actinopterygii</taxon>
        <taxon>Neopterygii</taxon>
        <taxon>Teleostei</taxon>
        <taxon>Protacanthopterygii</taxon>
        <taxon>Salmoniformes</taxon>
        <taxon>Salmonidae</taxon>
        <taxon>Salmoninae</taxon>
        <taxon>Oncorhynchus</taxon>
    </lineage>
</organism>
<feature type="chain" id="PRO_0000078314" description="Heat shock cognate 70 kDa protein">
    <location>
        <begin position="1"/>
        <end position="651"/>
    </location>
</feature>
<feature type="region of interest" description="Disordered" evidence="1">
    <location>
        <begin position="623"/>
        <end position="651"/>
    </location>
</feature>
<feature type="compositionally biased region" description="Gly residues" evidence="1">
    <location>
        <begin position="623"/>
        <end position="643"/>
    </location>
</feature>
<feature type="sequence conflict" description="In Ref. 2; AAA49563." evidence="2" ref="2">
    <original>AY</original>
    <variation>RT</variation>
    <location>
        <begin position="182"/>
        <end position="183"/>
    </location>
</feature>
<dbReference type="EMBL" id="S85730">
    <property type="protein sequence ID" value="AAB21658.1"/>
    <property type="molecule type" value="Genomic_DNA"/>
</dbReference>
<dbReference type="EMBL" id="K02550">
    <property type="protein sequence ID" value="AAA49563.1"/>
    <property type="molecule type" value="mRNA"/>
</dbReference>
<dbReference type="PIR" id="S21175">
    <property type="entry name" value="S21175"/>
</dbReference>
<dbReference type="RefSeq" id="NP_001117704.1">
    <property type="nucleotide sequence ID" value="NM_001124232.1"/>
</dbReference>
<dbReference type="SMR" id="P08108"/>
<dbReference type="Ensembl" id="ENSOMYT00000099498.2">
    <property type="protein sequence ID" value="ENSOMYP00000091433.1"/>
    <property type="gene ID" value="ENSOMYG00000041769.2"/>
</dbReference>
<dbReference type="GeneID" id="100135841"/>
<dbReference type="KEGG" id="omy:100135841"/>
<dbReference type="CTD" id="3312"/>
<dbReference type="GeneTree" id="ENSGT00950000183206"/>
<dbReference type="OrthoDB" id="2401965at2759"/>
<dbReference type="Proteomes" id="UP000694395">
    <property type="component" value="Chromosome 12"/>
</dbReference>
<dbReference type="GO" id="GO:0005737">
    <property type="term" value="C:cytoplasm"/>
    <property type="evidence" value="ECO:0000314"/>
    <property type="project" value="AgBase"/>
</dbReference>
<dbReference type="GO" id="GO:0016020">
    <property type="term" value="C:membrane"/>
    <property type="evidence" value="ECO:0000314"/>
    <property type="project" value="AgBase"/>
</dbReference>
<dbReference type="GO" id="GO:0005634">
    <property type="term" value="C:nucleus"/>
    <property type="evidence" value="ECO:0000314"/>
    <property type="project" value="AgBase"/>
</dbReference>
<dbReference type="GO" id="GO:0005524">
    <property type="term" value="F:ATP binding"/>
    <property type="evidence" value="ECO:0007669"/>
    <property type="project" value="UniProtKB-KW"/>
</dbReference>
<dbReference type="GO" id="GO:0140662">
    <property type="term" value="F:ATP-dependent protein folding chaperone"/>
    <property type="evidence" value="ECO:0007669"/>
    <property type="project" value="InterPro"/>
</dbReference>
<dbReference type="GO" id="GO:1903842">
    <property type="term" value="P:response to arsenite ion"/>
    <property type="evidence" value="ECO:0000314"/>
    <property type="project" value="AgBase"/>
</dbReference>
<dbReference type="GO" id="GO:0046686">
    <property type="term" value="P:response to cadmium ion"/>
    <property type="evidence" value="ECO:0000314"/>
    <property type="project" value="AgBase"/>
</dbReference>
<dbReference type="GO" id="GO:0046688">
    <property type="term" value="P:response to copper ion"/>
    <property type="evidence" value="ECO:0000314"/>
    <property type="project" value="AgBase"/>
</dbReference>
<dbReference type="GO" id="GO:0009408">
    <property type="term" value="P:response to heat"/>
    <property type="evidence" value="ECO:0000314"/>
    <property type="project" value="AgBase"/>
</dbReference>
<dbReference type="CDD" id="cd10233">
    <property type="entry name" value="ASKHA_NBD_HSP70_HSPA1"/>
    <property type="match status" value="1"/>
</dbReference>
<dbReference type="FunFam" id="2.60.34.10:FF:000002">
    <property type="entry name" value="Heat shock 70 kDa"/>
    <property type="match status" value="1"/>
</dbReference>
<dbReference type="FunFam" id="3.30.420.40:FF:000172">
    <property type="entry name" value="Heat shock 70 kDa protein"/>
    <property type="match status" value="1"/>
</dbReference>
<dbReference type="FunFam" id="3.30.30.30:FF:000001">
    <property type="entry name" value="heat shock 70 kDa protein-like"/>
    <property type="match status" value="1"/>
</dbReference>
<dbReference type="FunFam" id="3.30.420.40:FF:000028">
    <property type="entry name" value="heat shock 70 kDa protein-like"/>
    <property type="match status" value="1"/>
</dbReference>
<dbReference type="FunFam" id="3.30.420.40:FF:000135">
    <property type="entry name" value="Heat shock cognate 71 kDa protein"/>
    <property type="match status" value="1"/>
</dbReference>
<dbReference type="FunFam" id="3.90.640.10:FF:000134">
    <property type="entry name" value="Heat shock cognate 71 kDa protein"/>
    <property type="match status" value="1"/>
</dbReference>
<dbReference type="FunFam" id="1.20.1270.10:FF:000003">
    <property type="entry name" value="heat shock cognate 71 kDa protein-like"/>
    <property type="match status" value="1"/>
</dbReference>
<dbReference type="FunFam" id="3.30.420.40:FF:000026">
    <property type="entry name" value="Heat shock protein 70"/>
    <property type="match status" value="1"/>
</dbReference>
<dbReference type="Gene3D" id="1.20.1270.10">
    <property type="match status" value="1"/>
</dbReference>
<dbReference type="Gene3D" id="3.30.30.30">
    <property type="match status" value="1"/>
</dbReference>
<dbReference type="Gene3D" id="3.30.420.40">
    <property type="match status" value="2"/>
</dbReference>
<dbReference type="Gene3D" id="3.90.640.10">
    <property type="entry name" value="Actin, Chain A, domain 4"/>
    <property type="match status" value="1"/>
</dbReference>
<dbReference type="Gene3D" id="2.60.34.10">
    <property type="entry name" value="Substrate Binding Domain Of DNAk, Chain A, domain 1"/>
    <property type="match status" value="1"/>
</dbReference>
<dbReference type="InterPro" id="IPR043129">
    <property type="entry name" value="ATPase_NBD"/>
</dbReference>
<dbReference type="InterPro" id="IPR018181">
    <property type="entry name" value="Heat_shock_70_CS"/>
</dbReference>
<dbReference type="InterPro" id="IPR029048">
    <property type="entry name" value="HSP70_C_sf"/>
</dbReference>
<dbReference type="InterPro" id="IPR029047">
    <property type="entry name" value="HSP70_peptide-bd_sf"/>
</dbReference>
<dbReference type="InterPro" id="IPR013126">
    <property type="entry name" value="Hsp_70_fam"/>
</dbReference>
<dbReference type="NCBIfam" id="NF001413">
    <property type="entry name" value="PRK00290.1"/>
    <property type="match status" value="1"/>
</dbReference>
<dbReference type="PANTHER" id="PTHR19375">
    <property type="entry name" value="HEAT SHOCK PROTEIN 70KDA"/>
    <property type="match status" value="1"/>
</dbReference>
<dbReference type="Pfam" id="PF00012">
    <property type="entry name" value="HSP70"/>
    <property type="match status" value="1"/>
</dbReference>
<dbReference type="PRINTS" id="PR00301">
    <property type="entry name" value="HEATSHOCK70"/>
</dbReference>
<dbReference type="SUPFAM" id="SSF53067">
    <property type="entry name" value="Actin-like ATPase domain"/>
    <property type="match status" value="2"/>
</dbReference>
<dbReference type="SUPFAM" id="SSF100934">
    <property type="entry name" value="Heat shock protein 70kD (HSP70), C-terminal subdomain"/>
    <property type="match status" value="1"/>
</dbReference>
<dbReference type="SUPFAM" id="SSF100920">
    <property type="entry name" value="Heat shock protein 70kD (HSP70), peptide-binding domain"/>
    <property type="match status" value="1"/>
</dbReference>
<dbReference type="PROSITE" id="PS00297">
    <property type="entry name" value="HSP70_1"/>
    <property type="match status" value="1"/>
</dbReference>
<dbReference type="PROSITE" id="PS00329">
    <property type="entry name" value="HSP70_2"/>
    <property type="match status" value="1"/>
</dbReference>
<dbReference type="PROSITE" id="PS01036">
    <property type="entry name" value="HSP70_3"/>
    <property type="match status" value="1"/>
</dbReference>
<proteinExistence type="evidence at transcript level"/>
<name>HSP70_ONCMY</name>
<keyword id="KW-0067">ATP-binding</keyword>
<keyword id="KW-0547">Nucleotide-binding</keyword>
<keyword id="KW-0346">Stress response</keyword>
<protein>
    <recommendedName>
        <fullName>Heat shock cognate 70 kDa protein</fullName>
        <shortName>HSP70</shortName>
    </recommendedName>
</protein>
<accession>P08108</accession>
<evidence type="ECO:0000256" key="1">
    <source>
        <dbReference type="SAM" id="MobiDB-lite"/>
    </source>
</evidence>
<evidence type="ECO:0000305" key="2"/>
<comment type="similarity">
    <text evidence="2">Belongs to the heat shock protein 70 family.</text>
</comment>
<reference key="1">
    <citation type="journal article" date="1992" name="Eur. J. Biochem.">
        <title>Molecular cloning and characterization of a constitutively expressed heat-shock-cognate hsc71 gene from rainbow trout.</title>
        <authorList>
            <person name="Zafarullah M."/>
            <person name="Wisniewski J."/>
            <person name="Shworak N.W."/>
            <person name="Schieman S."/>
            <person name="Misra S."/>
            <person name="Gedamu L."/>
        </authorList>
    </citation>
    <scope>NUCLEOTIDE SEQUENCE [GENOMIC DNA]</scope>
</reference>
<reference key="2">
    <citation type="journal article" date="1984" name="Mol. Cell. Biol.">
        <title>70-Kilodalton heat shock polypeptides from rainbow trout: characterization of cDNA sequences.</title>
        <authorList>
            <person name="Kothary R.K."/>
            <person name="Jones D."/>
            <person name="Candido E.P.M."/>
        </authorList>
    </citation>
    <scope>NUCLEOTIDE SEQUENCE [MRNA] OF 1-213</scope>
</reference>
<sequence length="651" mass="71283">MSKGPAVGIDLGTTYSCVGVFQHGKVEIIANDQGNRTTPSYVAFTDSERLIGDAAKNQVAMNPCNTVFDAKRLIGRRFDDGVVQSDMKHWPFEVINDSTRPKLQVEYKGETKSFYPEEISSMVLVKMKEIAEAYLGKTVNNAVVTVPAYFNDSQRQATKDAGTISGLNVLRIINEPTAAAIAYGLDKKVGAERNVLIFDLGGGTFDVSILTIEDGIFEVKSTAGDTHLGGEDFDNRMVNHFIAEFKRKYKKDISDNKRAVRRLRTACERAKRTLSSSTQASIEIDSLYEGIDFYTSITRARFEELNADLFRGTLDPVEKSLRDAKMDKAQVHDIVLVGGSTRIPKIQKLLQDFFNGKELNKSINPDEAVAYGAAVQAAILSGDKSENVQDLLLLDVTPLSLGIETAGGVMTVLIKRNTTIPTKQTQTFTTYSDNQPGVLIQVYEGERAMTKDNNLLGKFELTGIPPAPRGVPQIEVTFDIDANGIMNVSAADKSTGKENKITITNDKGRLSKEDIERMVQEAEKYKCEDDVQRDKVSSKNSLESYAFNMKSTVEDEKLQGKISDEDKTKILEKCNEVIGWLDKNQTAEKEEYEHHQKELEKVCNPIITKLYQGAGGMPGGMPEGMAGGFPGAGGAAPGGGGSSGPTIEEVD</sequence>
<gene>
    <name type="primary">hsc71</name>
</gene>